<protein>
    <recommendedName>
        <fullName evidence="1">Ribosome rescue factor SmrB</fullName>
        <ecNumber evidence="1">3.1.-.-</ecNumber>
    </recommendedName>
</protein>
<evidence type="ECO:0000255" key="1">
    <source>
        <dbReference type="HAMAP-Rule" id="MF_01042"/>
    </source>
</evidence>
<gene>
    <name evidence="1" type="primary">smrB</name>
    <name type="ordered locus">HD_1679</name>
</gene>
<proteinExistence type="inferred from homology"/>
<feature type="chain" id="PRO_0000214554" description="Ribosome rescue factor SmrB">
    <location>
        <begin position="1"/>
        <end position="177"/>
    </location>
</feature>
<feature type="domain" description="Smr" evidence="1">
    <location>
        <begin position="92"/>
        <end position="167"/>
    </location>
</feature>
<name>SMRB_HAEDU</name>
<reference key="1">
    <citation type="submission" date="2003-06" db="EMBL/GenBank/DDBJ databases">
        <title>The complete genome sequence of Haemophilus ducreyi.</title>
        <authorList>
            <person name="Munson R.S. Jr."/>
            <person name="Ray W.C."/>
            <person name="Mahairas G."/>
            <person name="Sabo P."/>
            <person name="Mungur R."/>
            <person name="Johnson L."/>
            <person name="Nguyen D."/>
            <person name="Wang J."/>
            <person name="Forst C."/>
            <person name="Hood L."/>
        </authorList>
    </citation>
    <scope>NUCLEOTIDE SEQUENCE [LARGE SCALE GENOMIC DNA]</scope>
    <source>
        <strain>35000HP / ATCC 700724</strain>
    </source>
</reference>
<organism>
    <name type="scientific">Haemophilus ducreyi (strain 35000HP / ATCC 700724)</name>
    <dbReference type="NCBI Taxonomy" id="233412"/>
    <lineage>
        <taxon>Bacteria</taxon>
        <taxon>Pseudomonadati</taxon>
        <taxon>Pseudomonadota</taxon>
        <taxon>Gammaproteobacteria</taxon>
        <taxon>Pasteurellales</taxon>
        <taxon>Pasteurellaceae</taxon>
        <taxon>Haemophilus</taxon>
    </lineage>
</organism>
<sequence>MIEHDDLALFRTAIKGTKKIKQDTFVPKTMPRKKVSEWRETQQQKDTEFFFSDEYEPLLKEENEKVKYLRADIDPYILKQLGRGDFQPDLFLDLHGLTRQKAKTELAALILACEREQVYCASIMTGYGTRTLKEQIPRWLVQHPKVIALHQAPKQWGGDAAILVLIEQPESLEKRLF</sequence>
<accession>Q7VL13</accession>
<dbReference type="EC" id="3.1.-.-" evidence="1"/>
<dbReference type="EMBL" id="AE017143">
    <property type="protein sequence ID" value="AAP96446.1"/>
    <property type="molecule type" value="Genomic_DNA"/>
</dbReference>
<dbReference type="RefSeq" id="WP_010945478.1">
    <property type="nucleotide sequence ID" value="NC_002940.2"/>
</dbReference>
<dbReference type="SMR" id="Q7VL13"/>
<dbReference type="STRING" id="233412.HD_1679"/>
<dbReference type="KEGG" id="hdu:HD_1679"/>
<dbReference type="eggNOG" id="COG2840">
    <property type="taxonomic scope" value="Bacteria"/>
</dbReference>
<dbReference type="HOGENOM" id="CLU_055978_4_0_6"/>
<dbReference type="OrthoDB" id="5795446at2"/>
<dbReference type="Proteomes" id="UP000001022">
    <property type="component" value="Chromosome"/>
</dbReference>
<dbReference type="GO" id="GO:0004521">
    <property type="term" value="F:RNA endonuclease activity"/>
    <property type="evidence" value="ECO:0007669"/>
    <property type="project" value="UniProtKB-UniRule"/>
</dbReference>
<dbReference type="GO" id="GO:0019843">
    <property type="term" value="F:rRNA binding"/>
    <property type="evidence" value="ECO:0007669"/>
    <property type="project" value="UniProtKB-UniRule"/>
</dbReference>
<dbReference type="GO" id="GO:0072344">
    <property type="term" value="P:rescue of stalled ribosome"/>
    <property type="evidence" value="ECO:0007669"/>
    <property type="project" value="UniProtKB-UniRule"/>
</dbReference>
<dbReference type="Gene3D" id="3.30.1370.110">
    <property type="match status" value="1"/>
</dbReference>
<dbReference type="HAMAP" id="MF_01042">
    <property type="entry name" value="SmrB"/>
    <property type="match status" value="1"/>
</dbReference>
<dbReference type="InterPro" id="IPR002625">
    <property type="entry name" value="Smr_dom"/>
</dbReference>
<dbReference type="InterPro" id="IPR036063">
    <property type="entry name" value="Smr_dom_sf"/>
</dbReference>
<dbReference type="InterPro" id="IPR022990">
    <property type="entry name" value="SmrB-like"/>
</dbReference>
<dbReference type="NCBIfam" id="NF003432">
    <property type="entry name" value="PRK04946.1"/>
    <property type="match status" value="1"/>
</dbReference>
<dbReference type="PANTHER" id="PTHR35562">
    <property type="entry name" value="DNA ENDONUCLEASE SMRA-RELATED"/>
    <property type="match status" value="1"/>
</dbReference>
<dbReference type="PANTHER" id="PTHR35562:SF1">
    <property type="entry name" value="UPF0115 PROTEIN YFCN"/>
    <property type="match status" value="1"/>
</dbReference>
<dbReference type="Pfam" id="PF01713">
    <property type="entry name" value="Smr"/>
    <property type="match status" value="1"/>
</dbReference>
<dbReference type="SMART" id="SM00463">
    <property type="entry name" value="SMR"/>
    <property type="match status" value="1"/>
</dbReference>
<dbReference type="SUPFAM" id="SSF160443">
    <property type="entry name" value="SMR domain-like"/>
    <property type="match status" value="1"/>
</dbReference>
<dbReference type="PROSITE" id="PS50828">
    <property type="entry name" value="SMR"/>
    <property type="match status" value="1"/>
</dbReference>
<comment type="function">
    <text evidence="1">Acts as a ribosome collision sensor. Detects stalled/collided disomes (pairs of ribosomes where the leading ribosome is stalled and a second ribosome has collided with it) and endonucleolytically cleaves mRNA at the 5' boundary of the stalled ribosome. Stalled/collided disomes form a new interface (primarily via the 30S subunits) that binds SmrB. Cleaved mRNA becomes available for tmRNA ligation, leading to ribosomal subunit dissociation and rescue of stalled ribosomes.</text>
</comment>
<comment type="subunit">
    <text evidence="1">Associates with collided ribosomes, but not with correctly translating polysomes.</text>
</comment>
<comment type="similarity">
    <text evidence="1">Belongs to the SmrB family.</text>
</comment>
<keyword id="KW-0255">Endonuclease</keyword>
<keyword id="KW-0378">Hydrolase</keyword>
<keyword id="KW-0540">Nuclease</keyword>
<keyword id="KW-1185">Reference proteome</keyword>
<keyword id="KW-0694">RNA-binding</keyword>
<keyword id="KW-0699">rRNA-binding</keyword>